<name>FAR5_ASCSU</name>
<sequence length="9" mass="1052">SGKPTFIRF</sequence>
<feature type="peptide" id="PRO_0000043658" description="FMRFamide-like neuropeptide AF5">
    <location>
        <begin position="1"/>
        <end position="9"/>
    </location>
</feature>
<feature type="modified residue" description="Phenylalanine amide" evidence="1">
    <location>
        <position position="9"/>
    </location>
</feature>
<proteinExistence type="evidence at protein level"/>
<comment type="subcellular location">
    <subcellularLocation>
        <location>Secreted</location>
    </subcellularLocation>
</comment>
<comment type="similarity">
    <text evidence="2">Belongs to the FARP (FMRFamide related peptide) family.</text>
</comment>
<protein>
    <recommendedName>
        <fullName>FMRFamide-like neuropeptide AF5</fullName>
    </recommendedName>
</protein>
<accession>P43170</accession>
<organism>
    <name type="scientific">Ascaris suum</name>
    <name type="common">Pig roundworm</name>
    <name type="synonym">Ascaris lumbricoides</name>
    <dbReference type="NCBI Taxonomy" id="6253"/>
    <lineage>
        <taxon>Eukaryota</taxon>
        <taxon>Metazoa</taxon>
        <taxon>Ecdysozoa</taxon>
        <taxon>Nematoda</taxon>
        <taxon>Chromadorea</taxon>
        <taxon>Rhabditida</taxon>
        <taxon>Spirurina</taxon>
        <taxon>Ascaridomorpha</taxon>
        <taxon>Ascaridoidea</taxon>
        <taxon>Ascarididae</taxon>
        <taxon>Ascaris</taxon>
    </lineage>
</organism>
<reference key="1">
    <citation type="journal article" date="1995" name="Peptides">
        <title>Eight novel FMRFamide-like neuropeptides isolated from the nematode Ascaris suum.</title>
        <authorList>
            <person name="Cowden C."/>
            <person name="Stretton A.O.W."/>
        </authorList>
    </citation>
    <scope>PROTEIN SEQUENCE</scope>
    <scope>AMIDATION AT PHE-9</scope>
</reference>
<keyword id="KW-0027">Amidation</keyword>
<keyword id="KW-0903">Direct protein sequencing</keyword>
<keyword id="KW-0527">Neuropeptide</keyword>
<keyword id="KW-0964">Secreted</keyword>
<dbReference type="GO" id="GO:0005576">
    <property type="term" value="C:extracellular region"/>
    <property type="evidence" value="ECO:0007669"/>
    <property type="project" value="UniProtKB-SubCell"/>
</dbReference>
<dbReference type="GO" id="GO:0007218">
    <property type="term" value="P:neuropeptide signaling pathway"/>
    <property type="evidence" value="ECO:0007669"/>
    <property type="project" value="UniProtKB-KW"/>
</dbReference>
<evidence type="ECO:0000269" key="1">
    <source>
    </source>
</evidence>
<evidence type="ECO:0000305" key="2"/>